<sequence>MSSDSNDLDEDELLQMALKEQAKRDLTYQKPPSSSARKPVANLVQQPRQQKPVAAAAAPPKKSAAAVRKPSMDEDEESEVELLSISSGDDDLEREREIGGSSGGAGRGRGSDVREKGRARKEDDGAWDGGEPDCWKRVNEAELARRVRDMRESRTAPVVQKVEGKAPAPGKKVALTSLQSLPRGMECIDPLKLGIIDNKTLRLITESSGSPSKAEKVDNTLREKLVYFSDHFDPKLFLSRIHQDTTAADLEAGALGLKSDLKGRNLQRKQLVKDNFDCFVSCKTTIDDIESKLKRIEEDPEGSGTTHLFNCMKSVTSRANLAFEPLFERQAQAEKIRSVQGMLQRFRTLFNLPSIIRSSISKGEYDLAVREYKKAKSIALPSHVNILKRVLEEVEKVMLEFKGTLYKSMEDPKIDFTSLENTVRLLLELEPESDPVWHYLNVQNHRIHGLLEKCTYDHEARVEILRNDTHEKAISDAKWQQIQQNGVSYSDTASSNENNAVQVDLQSVEFPSEEIDILKGRYIKRLTAVLVHHIPVFWKTAISIFSGKFAKSSQVTDTSANKAEEKVTEARYSTHSLEEVAGMIRKTISVYEAKVNSTFCDFDESCILRPFMSDAINEVSKACQAFEAKESTPHSAVVALRKIQAEITKIYIQRLCSWMRASTEGISKEETWIPVSILERNRSPYAISYLPLAFRSVIVSGMEQVNLMILSVKSEAAKSEDMFAQIEEIIISVRLAFLNCFLDFAAHLEQIGADLSQSTSRQDNWKNGYSDEHQEEPSANTYGSVIDPHRRLLMVLSNIGYCKDELASELYNKFKYTWLQSRDKNEDSSDLQDLIMSFSGLGEKVLEHYTFAKANLIRTAATNYLLDSGIQWGSAPQVKGIRDAAVELLHTLVAVHAEVFAGAKPLLDKILGVLIEGLIDTFLSVVEENRSSDLRSIDANGFCQLMFELEYFETVLYSYFTSAATESLKSLQGTVLEIAIESISEAVETPGHNRRPTRGSEDTVSDDKQSVSADDLLALTKQCSNELLQQELERTRVNTACFAESAPLESTPPLPKATYSSFRGSMDSPSRNYRGSQSSGSPINARPRRR</sequence>
<dbReference type="EMBL" id="AF479278">
    <property type="protein sequence ID" value="AAL87121.1"/>
    <property type="molecule type" value="mRNA"/>
</dbReference>
<dbReference type="EMBL" id="AC079283">
    <property type="protein sequence ID" value="AAG51148.1"/>
    <property type="molecule type" value="Genomic_DNA"/>
</dbReference>
<dbReference type="EMBL" id="CP002684">
    <property type="protein sequence ID" value="AEE35895.1"/>
    <property type="molecule type" value="Genomic_DNA"/>
</dbReference>
<dbReference type="EMBL" id="AK118540">
    <property type="protein sequence ID" value="BAC43143.1"/>
    <property type="molecule type" value="mRNA"/>
</dbReference>
<dbReference type="EMBL" id="BT005978">
    <property type="protein sequence ID" value="AAO64913.1"/>
    <property type="molecule type" value="mRNA"/>
</dbReference>
<dbReference type="EMBL" id="AK230372">
    <property type="protein sequence ID" value="BAF02171.1"/>
    <property type="molecule type" value="mRNA"/>
</dbReference>
<dbReference type="PIR" id="C96797">
    <property type="entry name" value="C96797"/>
</dbReference>
<dbReference type="RefSeq" id="NP_177811.2">
    <property type="nucleotide sequence ID" value="NM_106336.4"/>
</dbReference>
<dbReference type="SMR" id="Q8S3U9"/>
<dbReference type="BioGRID" id="29239">
    <property type="interactions" value="5"/>
</dbReference>
<dbReference type="FunCoup" id="Q8S3U9">
    <property type="interactions" value="4504"/>
</dbReference>
<dbReference type="IntAct" id="Q8S3U9">
    <property type="interactions" value="4"/>
</dbReference>
<dbReference type="STRING" id="3702.Q8S3U9"/>
<dbReference type="TCDB" id="1.F.2.1.3">
    <property type="family name" value="the octameric exocyst (exocyst) family"/>
</dbReference>
<dbReference type="iPTMnet" id="Q8S3U9"/>
<dbReference type="PaxDb" id="3702-AT1G76850.1"/>
<dbReference type="ProteomicsDB" id="232950"/>
<dbReference type="EnsemblPlants" id="AT1G76850.1">
    <property type="protein sequence ID" value="AT1G76850.1"/>
    <property type="gene ID" value="AT1G76850"/>
</dbReference>
<dbReference type="GeneID" id="844020"/>
<dbReference type="Gramene" id="AT1G76850.1">
    <property type="protein sequence ID" value="AT1G76850.1"/>
    <property type="gene ID" value="AT1G76850"/>
</dbReference>
<dbReference type="KEGG" id="ath:AT1G76850"/>
<dbReference type="Araport" id="AT1G76850"/>
<dbReference type="TAIR" id="AT1G76850">
    <property type="gene designation" value="SEC5A"/>
</dbReference>
<dbReference type="eggNOG" id="KOG2347">
    <property type="taxonomic scope" value="Eukaryota"/>
</dbReference>
<dbReference type="HOGENOM" id="CLU_003742_0_0_1"/>
<dbReference type="InParanoid" id="Q8S3U9"/>
<dbReference type="OMA" id="RMWMDVD"/>
<dbReference type="PhylomeDB" id="Q8S3U9"/>
<dbReference type="PRO" id="PR:Q8S3U9"/>
<dbReference type="Proteomes" id="UP000006548">
    <property type="component" value="Chromosome 1"/>
</dbReference>
<dbReference type="ExpressionAtlas" id="Q8S3U9">
    <property type="expression patterns" value="baseline and differential"/>
</dbReference>
<dbReference type="GO" id="GO:0005829">
    <property type="term" value="C:cytosol"/>
    <property type="evidence" value="ECO:0000314"/>
    <property type="project" value="UniProtKB"/>
</dbReference>
<dbReference type="GO" id="GO:0000145">
    <property type="term" value="C:exocyst"/>
    <property type="evidence" value="ECO:0007669"/>
    <property type="project" value="InterPro"/>
</dbReference>
<dbReference type="GO" id="GO:0070062">
    <property type="term" value="C:extracellular exosome"/>
    <property type="evidence" value="ECO:0000314"/>
    <property type="project" value="UniProtKB"/>
</dbReference>
<dbReference type="GO" id="GO:0005886">
    <property type="term" value="C:plasma membrane"/>
    <property type="evidence" value="ECO:0007005"/>
    <property type="project" value="TAIR"/>
</dbReference>
<dbReference type="GO" id="GO:0009506">
    <property type="term" value="C:plasmodesma"/>
    <property type="evidence" value="ECO:0007005"/>
    <property type="project" value="TAIR"/>
</dbReference>
<dbReference type="GO" id="GO:0060321">
    <property type="term" value="P:acceptance of pollen"/>
    <property type="evidence" value="ECO:0000315"/>
    <property type="project" value="TAIR"/>
</dbReference>
<dbReference type="GO" id="GO:0006887">
    <property type="term" value="P:exocytosis"/>
    <property type="evidence" value="ECO:0007669"/>
    <property type="project" value="UniProtKB-KW"/>
</dbReference>
<dbReference type="GO" id="GO:0006893">
    <property type="term" value="P:Golgi to plasma membrane transport"/>
    <property type="evidence" value="ECO:0007669"/>
    <property type="project" value="InterPro"/>
</dbReference>
<dbReference type="InterPro" id="IPR016159">
    <property type="entry name" value="Cullin_repeat-like_dom_sf"/>
</dbReference>
<dbReference type="InterPro" id="IPR029175">
    <property type="entry name" value="EXOC2/Sec5"/>
</dbReference>
<dbReference type="InterPro" id="IPR039481">
    <property type="entry name" value="EXOC2/Sec5_N_dom"/>
</dbReference>
<dbReference type="PANTHER" id="PTHR13043:SF1">
    <property type="entry name" value="EXOCYST COMPLEX COMPONENT 2"/>
    <property type="match status" value="1"/>
</dbReference>
<dbReference type="PANTHER" id="PTHR13043">
    <property type="entry name" value="EXOCYST COMPLEX COMPONENT SEC5"/>
    <property type="match status" value="1"/>
</dbReference>
<dbReference type="Pfam" id="PF15469">
    <property type="entry name" value="Sec5"/>
    <property type="match status" value="1"/>
</dbReference>
<dbReference type="SUPFAM" id="SSF74788">
    <property type="entry name" value="Cullin repeat-like"/>
    <property type="match status" value="1"/>
</dbReference>
<proteinExistence type="evidence at protein level"/>
<comment type="function">
    <text evidence="6">Component of the exocyst complex involved in the docking of exocytic vesicles with fusion sites on the plasma membrane during regulated or polarized secretion. Involved in polarized cell growth and organ morphogenesis. During cytokinesis, involved in cell plate initiation, cell plate maturation and formation of new primary cell wall. Probable component of an exocyst subcomplex specifically involved in autophagy-related, Golgi-independent membrane traffic to the vacuole. Regulates autophagosome formation and autophagy-related Golgi-independent import into the vacuole.</text>
</comment>
<comment type="subunit">
    <text evidence="4 5 6 8">The exocyst complex is composed of SEC3, SEC5, SEC6, SEC8, SEC10, EXO70A1 and EXO84B. Interacts with SEC3A and EXO70B1. Binds to EXO70H1 and EXO70B2 (PubMed:21199889). Binds directly to B1L (PubMed:35249253).</text>
</comment>
<comment type="subcellular location">
    <subcellularLocation>
        <location evidence="3 7">Cytoplasm</location>
        <location evidence="3 7">Cytosol</location>
    </subcellularLocation>
    <subcellularLocation>
        <location evidence="7">Secreted</location>
        <location evidence="7">Extracellular exosome</location>
    </subcellularLocation>
    <text evidence="3 7">Localized to globular structures in the perinuclear region (PubMed:19895414). Shuttles from the cytoplasm to the exocyst-positive organelle (EXPO) in the presence of EXO70E2 (PubMed:24307681).</text>
</comment>
<comment type="disruption phenotype">
    <text evidence="2">No visible phenotype under normal growth conditions, but the double mutant sec5a-1 and sec5b-1 is male gametophytic lethal due to defect in pollen germination and pollen tube growth.</text>
</comment>
<comment type="similarity">
    <text evidence="10">Belongs to the SEC5 family.</text>
</comment>
<evidence type="ECO:0000256" key="1">
    <source>
        <dbReference type="SAM" id="MobiDB-lite"/>
    </source>
</evidence>
<evidence type="ECO:0000269" key="2">
    <source>
    </source>
</evidence>
<evidence type="ECO:0000269" key="3">
    <source>
    </source>
</evidence>
<evidence type="ECO:0000269" key="4">
    <source>
    </source>
</evidence>
<evidence type="ECO:0000269" key="5">
    <source>
    </source>
</evidence>
<evidence type="ECO:0000269" key="6">
    <source>
    </source>
</evidence>
<evidence type="ECO:0000269" key="7">
    <source>
    </source>
</evidence>
<evidence type="ECO:0000269" key="8">
    <source>
    </source>
</evidence>
<evidence type="ECO:0000303" key="9">
    <source>
    </source>
</evidence>
<evidence type="ECO:0000305" key="10"/>
<evidence type="ECO:0000312" key="11">
    <source>
        <dbReference type="Araport" id="AT1G76850"/>
    </source>
</evidence>
<evidence type="ECO:0000312" key="12">
    <source>
        <dbReference type="EMBL" id="AAG51148.1"/>
    </source>
</evidence>
<evidence type="ECO:0007744" key="13">
    <source>
    </source>
</evidence>
<evidence type="ECO:0007744" key="14">
    <source>
    </source>
</evidence>
<accession>Q8S3U9</accession>
<accession>Q0WL36</accession>
<accession>Q541W6</accession>
<accession>Q9C6K6</accession>
<name>SEC5A_ARATH</name>
<feature type="chain" id="PRO_0000118923" description="Exocyst complex component SEC5A">
    <location>
        <begin position="1"/>
        <end position="1090"/>
    </location>
</feature>
<feature type="region of interest" description="Disordered" evidence="1">
    <location>
        <begin position="18"/>
        <end position="128"/>
    </location>
</feature>
<feature type="region of interest" description="Disordered" evidence="1">
    <location>
        <begin position="759"/>
        <end position="783"/>
    </location>
</feature>
<feature type="region of interest" description="Disordered" evidence="1">
    <location>
        <begin position="987"/>
        <end position="1010"/>
    </location>
</feature>
<feature type="region of interest" description="Disordered" evidence="1">
    <location>
        <begin position="1046"/>
        <end position="1090"/>
    </location>
</feature>
<feature type="compositionally biased region" description="Low complexity" evidence="1">
    <location>
        <begin position="45"/>
        <end position="69"/>
    </location>
</feature>
<feature type="compositionally biased region" description="Basic and acidic residues" evidence="1">
    <location>
        <begin position="109"/>
        <end position="124"/>
    </location>
</feature>
<feature type="compositionally biased region" description="Basic and acidic residues" evidence="1">
    <location>
        <begin position="998"/>
        <end position="1009"/>
    </location>
</feature>
<feature type="compositionally biased region" description="Polar residues" evidence="1">
    <location>
        <begin position="1058"/>
        <end position="1082"/>
    </location>
</feature>
<feature type="modified residue" description="Phosphoserine" evidence="13 14">
    <location>
        <position position="180"/>
    </location>
</feature>
<feature type="sequence conflict" description="In Ref. 2; AAG51148." evidence="10" ref="2">
    <location>
        <begin position="384"/>
        <end position="388"/>
    </location>
</feature>
<gene>
    <name evidence="9" type="primary">SEC5A</name>
    <name evidence="11" type="ordered locus">At1g76850</name>
    <name evidence="12" type="ORF">F7O12.2</name>
</gene>
<organism>
    <name type="scientific">Arabidopsis thaliana</name>
    <name type="common">Mouse-ear cress</name>
    <dbReference type="NCBI Taxonomy" id="3702"/>
    <lineage>
        <taxon>Eukaryota</taxon>
        <taxon>Viridiplantae</taxon>
        <taxon>Streptophyta</taxon>
        <taxon>Embryophyta</taxon>
        <taxon>Tracheophyta</taxon>
        <taxon>Spermatophyta</taxon>
        <taxon>Magnoliopsida</taxon>
        <taxon>eudicotyledons</taxon>
        <taxon>Gunneridae</taxon>
        <taxon>Pentapetalae</taxon>
        <taxon>rosids</taxon>
        <taxon>malvids</taxon>
        <taxon>Brassicales</taxon>
        <taxon>Brassicaceae</taxon>
        <taxon>Camelineae</taxon>
        <taxon>Arabidopsis</taxon>
    </lineage>
</organism>
<keyword id="KW-0963">Cytoplasm</keyword>
<keyword id="KW-0268">Exocytosis</keyword>
<keyword id="KW-0597">Phosphoprotein</keyword>
<keyword id="KW-1185">Reference proteome</keyword>
<keyword id="KW-0964">Secreted</keyword>
<keyword id="KW-0813">Transport</keyword>
<protein>
    <recommendedName>
        <fullName evidence="9">Exocyst complex component SEC5A</fullName>
        <shortName evidence="9">AtSec5a</shortName>
    </recommendedName>
    <alternativeName>
        <fullName>Exocyst complex component 2</fullName>
    </alternativeName>
</protein>
<reference key="1">
    <citation type="submission" date="2002-02" db="EMBL/GenBank/DDBJ databases">
        <title>Molecular characterization of the exocyst complex in Arabidopsis thaliana.</title>
        <authorList>
            <person name="Elias M."/>
            <person name="Cvrckova F."/>
            <person name="Zarsky V."/>
        </authorList>
    </citation>
    <scope>NUCLEOTIDE SEQUENCE [MRNA]</scope>
    <source>
        <strain>cv. Columbia</strain>
    </source>
</reference>
<reference key="2">
    <citation type="journal article" date="2000" name="Nature">
        <title>Sequence and analysis of chromosome 1 of the plant Arabidopsis thaliana.</title>
        <authorList>
            <person name="Theologis A."/>
            <person name="Ecker J.R."/>
            <person name="Palm C.J."/>
            <person name="Federspiel N.A."/>
            <person name="Kaul S."/>
            <person name="White O."/>
            <person name="Alonso J."/>
            <person name="Altafi H."/>
            <person name="Araujo R."/>
            <person name="Bowman C.L."/>
            <person name="Brooks S.Y."/>
            <person name="Buehler E."/>
            <person name="Chan A."/>
            <person name="Chao Q."/>
            <person name="Chen H."/>
            <person name="Cheuk R.F."/>
            <person name="Chin C.W."/>
            <person name="Chung M.K."/>
            <person name="Conn L."/>
            <person name="Conway A.B."/>
            <person name="Conway A.R."/>
            <person name="Creasy T.H."/>
            <person name="Dewar K."/>
            <person name="Dunn P."/>
            <person name="Etgu P."/>
            <person name="Feldblyum T.V."/>
            <person name="Feng J.-D."/>
            <person name="Fong B."/>
            <person name="Fujii C.Y."/>
            <person name="Gill J.E."/>
            <person name="Goldsmith A.D."/>
            <person name="Haas B."/>
            <person name="Hansen N.F."/>
            <person name="Hughes B."/>
            <person name="Huizar L."/>
            <person name="Hunter J.L."/>
            <person name="Jenkins J."/>
            <person name="Johnson-Hopson C."/>
            <person name="Khan S."/>
            <person name="Khaykin E."/>
            <person name="Kim C.J."/>
            <person name="Koo H.L."/>
            <person name="Kremenetskaia I."/>
            <person name="Kurtz D.B."/>
            <person name="Kwan A."/>
            <person name="Lam B."/>
            <person name="Langin-Hooper S."/>
            <person name="Lee A."/>
            <person name="Lee J.M."/>
            <person name="Lenz C.A."/>
            <person name="Li J.H."/>
            <person name="Li Y.-P."/>
            <person name="Lin X."/>
            <person name="Liu S.X."/>
            <person name="Liu Z.A."/>
            <person name="Luros J.S."/>
            <person name="Maiti R."/>
            <person name="Marziali A."/>
            <person name="Militscher J."/>
            <person name="Miranda M."/>
            <person name="Nguyen M."/>
            <person name="Nierman W.C."/>
            <person name="Osborne B.I."/>
            <person name="Pai G."/>
            <person name="Peterson J."/>
            <person name="Pham P.K."/>
            <person name="Rizzo M."/>
            <person name="Rooney T."/>
            <person name="Rowley D."/>
            <person name="Sakano H."/>
            <person name="Salzberg S.L."/>
            <person name="Schwartz J.R."/>
            <person name="Shinn P."/>
            <person name="Southwick A.M."/>
            <person name="Sun H."/>
            <person name="Tallon L.J."/>
            <person name="Tambunga G."/>
            <person name="Toriumi M.J."/>
            <person name="Town C.D."/>
            <person name="Utterback T."/>
            <person name="Van Aken S."/>
            <person name="Vaysberg M."/>
            <person name="Vysotskaia V.S."/>
            <person name="Walker M."/>
            <person name="Wu D."/>
            <person name="Yu G."/>
            <person name="Fraser C.M."/>
            <person name="Venter J.C."/>
            <person name="Davis R.W."/>
        </authorList>
    </citation>
    <scope>NUCLEOTIDE SEQUENCE [LARGE SCALE GENOMIC DNA]</scope>
    <source>
        <strain>cv. Columbia</strain>
    </source>
</reference>
<reference key="3">
    <citation type="journal article" date="2017" name="Plant J.">
        <title>Araport11: a complete reannotation of the Arabidopsis thaliana reference genome.</title>
        <authorList>
            <person name="Cheng C.Y."/>
            <person name="Krishnakumar V."/>
            <person name="Chan A.P."/>
            <person name="Thibaud-Nissen F."/>
            <person name="Schobel S."/>
            <person name="Town C.D."/>
        </authorList>
    </citation>
    <scope>GENOME REANNOTATION</scope>
    <source>
        <strain>cv. Columbia</strain>
    </source>
</reference>
<reference key="4">
    <citation type="journal article" date="2002" name="Science">
        <title>Functional annotation of a full-length Arabidopsis cDNA collection.</title>
        <authorList>
            <person name="Seki M."/>
            <person name="Narusaka M."/>
            <person name="Kamiya A."/>
            <person name="Ishida J."/>
            <person name="Satou M."/>
            <person name="Sakurai T."/>
            <person name="Nakajima M."/>
            <person name="Enju A."/>
            <person name="Akiyama K."/>
            <person name="Oono Y."/>
            <person name="Muramatsu M."/>
            <person name="Hayashizaki Y."/>
            <person name="Kawai J."/>
            <person name="Carninci P."/>
            <person name="Itoh M."/>
            <person name="Ishii Y."/>
            <person name="Arakawa T."/>
            <person name="Shibata K."/>
            <person name="Shinagawa A."/>
            <person name="Shinozaki K."/>
        </authorList>
    </citation>
    <scope>NUCLEOTIDE SEQUENCE [LARGE SCALE MRNA]</scope>
    <source>
        <strain>cv. Columbia</strain>
    </source>
</reference>
<reference key="5">
    <citation type="journal article" date="2003" name="Science">
        <title>Empirical analysis of transcriptional activity in the Arabidopsis genome.</title>
        <authorList>
            <person name="Yamada K."/>
            <person name="Lim J."/>
            <person name="Dale J.M."/>
            <person name="Chen H."/>
            <person name="Shinn P."/>
            <person name="Palm C.J."/>
            <person name="Southwick A.M."/>
            <person name="Wu H.C."/>
            <person name="Kim C.J."/>
            <person name="Nguyen M."/>
            <person name="Pham P.K."/>
            <person name="Cheuk R.F."/>
            <person name="Karlin-Newmann G."/>
            <person name="Liu S.X."/>
            <person name="Lam B."/>
            <person name="Sakano H."/>
            <person name="Wu T."/>
            <person name="Yu G."/>
            <person name="Miranda M."/>
            <person name="Quach H.L."/>
            <person name="Tripp M."/>
            <person name="Chang C.H."/>
            <person name="Lee J.M."/>
            <person name="Toriumi M.J."/>
            <person name="Chan M.M."/>
            <person name="Tang C.C."/>
            <person name="Onodera C.S."/>
            <person name="Deng J.M."/>
            <person name="Akiyama K."/>
            <person name="Ansari Y."/>
            <person name="Arakawa T."/>
            <person name="Banh J."/>
            <person name="Banno F."/>
            <person name="Bowser L."/>
            <person name="Brooks S.Y."/>
            <person name="Carninci P."/>
            <person name="Chao Q."/>
            <person name="Choy N."/>
            <person name="Enju A."/>
            <person name="Goldsmith A.D."/>
            <person name="Gurjal M."/>
            <person name="Hansen N.F."/>
            <person name="Hayashizaki Y."/>
            <person name="Johnson-Hopson C."/>
            <person name="Hsuan V.W."/>
            <person name="Iida K."/>
            <person name="Karnes M."/>
            <person name="Khan S."/>
            <person name="Koesema E."/>
            <person name="Ishida J."/>
            <person name="Jiang P.X."/>
            <person name="Jones T."/>
            <person name="Kawai J."/>
            <person name="Kamiya A."/>
            <person name="Meyers C."/>
            <person name="Nakajima M."/>
            <person name="Narusaka M."/>
            <person name="Seki M."/>
            <person name="Sakurai T."/>
            <person name="Satou M."/>
            <person name="Tamse R."/>
            <person name="Vaysberg M."/>
            <person name="Wallender E.K."/>
            <person name="Wong C."/>
            <person name="Yamamura Y."/>
            <person name="Yuan S."/>
            <person name="Shinozaki K."/>
            <person name="Davis R.W."/>
            <person name="Theologis A."/>
            <person name="Ecker J.R."/>
        </authorList>
    </citation>
    <scope>NUCLEOTIDE SEQUENCE [LARGE SCALE MRNA]</scope>
    <source>
        <strain>cv. Columbia</strain>
    </source>
</reference>
<reference key="6">
    <citation type="submission" date="2006-07" db="EMBL/GenBank/DDBJ databases">
        <title>Large-scale analysis of RIKEN Arabidopsis full-length (RAFL) cDNAs.</title>
        <authorList>
            <person name="Totoki Y."/>
            <person name="Seki M."/>
            <person name="Ishida J."/>
            <person name="Nakajima M."/>
            <person name="Enju A."/>
            <person name="Kamiya A."/>
            <person name="Narusaka M."/>
            <person name="Shin-i T."/>
            <person name="Nakagawa M."/>
            <person name="Sakamoto N."/>
            <person name="Oishi K."/>
            <person name="Kohara Y."/>
            <person name="Kobayashi M."/>
            <person name="Toyoda A."/>
            <person name="Sakaki Y."/>
            <person name="Sakurai T."/>
            <person name="Iida K."/>
            <person name="Akiyama K."/>
            <person name="Satou M."/>
            <person name="Toyoda T."/>
            <person name="Konagaya A."/>
            <person name="Carninci P."/>
            <person name="Kawai J."/>
            <person name="Hayashizaki Y."/>
            <person name="Shinozaki K."/>
        </authorList>
    </citation>
    <scope>NUCLEOTIDE SEQUENCE [LARGE SCALE MRNA] OF 393-1090</scope>
    <source>
        <strain>cv. Columbia</strain>
    </source>
</reference>
<reference key="7">
    <citation type="journal article" date="2008" name="J. Proteome Res.">
        <title>Site-specific phosphorylation profiling of Arabidopsis proteins by mass spectrometry and peptide chip analysis.</title>
        <authorList>
            <person name="de la Fuente van Bentem S."/>
            <person name="Anrather D."/>
            <person name="Dohnal I."/>
            <person name="Roitinger E."/>
            <person name="Csaszar E."/>
            <person name="Joore J."/>
            <person name="Buijnink J."/>
            <person name="Carreri A."/>
            <person name="Forzani C."/>
            <person name="Lorkovic Z.J."/>
            <person name="Barta A."/>
            <person name="Lecourieux D."/>
            <person name="Verhounig A."/>
            <person name="Jonak C."/>
            <person name="Hirt H."/>
        </authorList>
    </citation>
    <scope>PHOSPHORYLATION [LARGE SCALE ANALYSIS] AT SER-180</scope>
    <scope>IDENTIFICATION BY MASS SPECTROMETRY [LARGE SCALE ANALYSIS]</scope>
    <source>
        <tissue>Root</tissue>
    </source>
</reference>
<reference key="8">
    <citation type="journal article" date="2008" name="Plant Cell">
        <title>An exocyst complex functions in plant cell growth in Arabidopsis and tobacco.</title>
        <authorList>
            <person name="Hala M."/>
            <person name="Cole R."/>
            <person name="Synek L."/>
            <person name="Drdova E."/>
            <person name="Pecenkova T."/>
            <person name="Nordheim A."/>
            <person name="Lamkemeyer T."/>
            <person name="Madlung J."/>
            <person name="Hochholdinger F."/>
            <person name="Fowler J.E."/>
            <person name="Zarsky V."/>
        </authorList>
    </citation>
    <scope>COMPONENT OF THE EXOCYST COMPLEX</scope>
    <scope>DISRUPTION PHENOTYPE</scope>
</reference>
<reference key="9">
    <citation type="journal article" date="2009" name="J. Proteomics">
        <title>Phosphoproteomic analysis of nuclei-enriched fractions from Arabidopsis thaliana.</title>
        <authorList>
            <person name="Jones A.M.E."/>
            <person name="MacLean D."/>
            <person name="Studholme D.J."/>
            <person name="Serna-Sanz A."/>
            <person name="Andreasson E."/>
            <person name="Rathjen J.P."/>
            <person name="Peck S.C."/>
        </authorList>
    </citation>
    <scope>PHOSPHORYLATION [LARGE SCALE ANALYSIS] AT SER-180</scope>
    <scope>IDENTIFICATION BY MASS SPECTROMETRY [LARGE SCALE ANALYSIS]</scope>
    <source>
        <strain>cv. Columbia</strain>
    </source>
</reference>
<reference key="10">
    <citation type="journal article" date="2009" name="Plant Physiol.">
        <title>Large-scale Arabidopsis phosphoproteome profiling reveals novel chloroplast kinase substrates and phosphorylation networks.</title>
        <authorList>
            <person name="Reiland S."/>
            <person name="Messerli G."/>
            <person name="Baerenfaller K."/>
            <person name="Gerrits B."/>
            <person name="Endler A."/>
            <person name="Grossmann J."/>
            <person name="Gruissem W."/>
            <person name="Baginsky S."/>
        </authorList>
    </citation>
    <scope>IDENTIFICATION BY MASS SPECTROMETRY [LARGE SCALE ANALYSIS]</scope>
</reference>
<reference key="11">
    <citation type="journal article" date="2010" name="New Phytol.">
        <title>Characterization of the Arabidopsis thaliana exocyst complex gene families by phylogenetic, expression profiling, and subcellular localization studies.</title>
        <authorList>
            <person name="Chong Y.T."/>
            <person name="Gidda S.K."/>
            <person name="Sanford C."/>
            <person name="Parkinson J."/>
            <person name="Mullen R.T."/>
            <person name="Goring D.R."/>
        </authorList>
    </citation>
    <scope>GENE FAMILY</scope>
    <scope>NOMENCLATURE</scope>
    <scope>SUBCELLULAR LOCATION</scope>
</reference>
<reference key="12">
    <citation type="journal article" date="2011" name="J. Exp. Bot.">
        <title>The role for the exocyst complex subunits Exo70B2 and Exo70H1 in the plant-pathogen interaction.</title>
        <authorList>
            <person name="Pecenkova T."/>
            <person name="Hala M."/>
            <person name="Kulich I."/>
            <person name="Kocourkova D."/>
            <person name="Drdova E."/>
            <person name="Fendrych M."/>
            <person name="Toupalova H."/>
            <person name="Zarsky V."/>
        </authorList>
    </citation>
    <scope>INTERACTION WITH EXO70H1 AND EXO70B2</scope>
    <source>
        <strain>cv. Columbia</strain>
    </source>
</reference>
<reference key="13">
    <citation type="journal article" date="2013" name="New Phytol.">
        <title>The Arabidopsis exocyst subunit SEC3A is essential for embryo development and accumulates in transient puncta at the plasma membrane.</title>
        <authorList>
            <person name="Zhang Y."/>
            <person name="Immink R."/>
            <person name="Liu C.M."/>
            <person name="Emons A.M."/>
            <person name="Ketelaar T."/>
        </authorList>
    </citation>
    <scope>INTERACTION WITH SEC3A</scope>
</reference>
<reference key="14">
    <citation type="journal article" date="2013" name="Traffic">
        <title>Arabidopsis exocyst subcomplex containing subunit EXO70B1 is involved in the autophagy-related transport to the vacuole.</title>
        <authorList>
            <person name="Kulich I."/>
            <person name="Pecenkova T."/>
            <person name="Sekeres J."/>
            <person name="Smetana O."/>
            <person name="Fendrych M."/>
            <person name="Foissner I."/>
            <person name="Hoeftberger M."/>
            <person name="Zarsky V."/>
        </authorList>
    </citation>
    <scope>FUNCTION</scope>
    <scope>INTERACTION WITH EXO70B1</scope>
    <source>
        <strain>cv. Columbia</strain>
    </source>
</reference>
<reference key="15">
    <citation type="journal article" date="2014" name="Mol. Biol. Cell">
        <title>Exo70E2 is essential for exocyst subunit recruitment and EXPO formation in both plants and animals.</title>
        <authorList>
            <person name="Ding Y."/>
            <person name="Wang J."/>
            <person name="Chun Lai J.H."/>
            <person name="Ling Chan V.H."/>
            <person name="Wang X."/>
            <person name="Cai Y."/>
            <person name="Tan X."/>
            <person name="Bao Y."/>
            <person name="Xia J."/>
            <person name="Robinson D.G."/>
            <person name="Jiang L."/>
        </authorList>
    </citation>
    <scope>SUBCELLULAR LOCATION</scope>
    <source>
        <strain>cv. Columbia</strain>
    </source>
</reference>
<reference key="16">
    <citation type="journal article" date="2022" name="J. Integr. Plant Biol.">
        <title>BYPASS1-LIKE regulates lateral root initiation via exocytic vesicular trafficking-mediated PIN recycling in Arabidopsis.</title>
        <authorList>
            <person name="Yang G."/>
            <person name="Chen B.-X."/>
            <person name="Chen T."/>
            <person name="Chen J.-H."/>
            <person name="Lin X.-Y."/>
            <person name="Yue X.-L."/>
            <person name="An L.-Z."/>
            <person name="Zhang H."/>
        </authorList>
    </citation>
    <scope>INTERACTION WITH B1L</scope>
    <source>
        <strain>cv. Columbia</strain>
    </source>
</reference>